<accession>A4QNL6</accession>
<evidence type="ECO:0000255" key="1"/>
<evidence type="ECO:0000305" key="2"/>
<reference key="1">
    <citation type="submission" date="2007-03" db="EMBL/GenBank/DDBJ databases">
        <authorList>
            <consortium name="NIH - Xenopus Gene Collection (XGC) project"/>
        </authorList>
    </citation>
    <scope>NUCLEOTIDE SEQUENCE [LARGE SCALE MRNA]</scope>
    <source>
        <tissue>Tadpole</tissue>
    </source>
</reference>
<dbReference type="EMBL" id="BC135856">
    <property type="protein sequence ID" value="AAI35857.1"/>
    <property type="status" value="ALT_INIT"/>
    <property type="molecule type" value="mRNA"/>
</dbReference>
<dbReference type="RefSeq" id="NP_001016254.2">
    <property type="nucleotide sequence ID" value="NM_001016254.3"/>
</dbReference>
<dbReference type="RefSeq" id="NP_001231816.1">
    <property type="nucleotide sequence ID" value="NM_001244887.1"/>
</dbReference>
<dbReference type="FunCoup" id="A4QNL6">
    <property type="interactions" value="155"/>
</dbReference>
<dbReference type="PaxDb" id="8364-ENSXETP00000016234"/>
<dbReference type="GeneID" id="549008"/>
<dbReference type="KEGG" id="xtr:549008"/>
<dbReference type="AGR" id="Xenbase:XB-GENE-5848731"/>
<dbReference type="CTD" id="114926"/>
<dbReference type="Xenbase" id="XB-GENE-5848731">
    <property type="gene designation" value="smim19"/>
</dbReference>
<dbReference type="eggNOG" id="ENOG502S18T">
    <property type="taxonomic scope" value="Eukaryota"/>
</dbReference>
<dbReference type="HOGENOM" id="CLU_172229_0_0_1"/>
<dbReference type="InParanoid" id="A4QNL6"/>
<dbReference type="OrthoDB" id="8663985at2759"/>
<dbReference type="TreeFam" id="TF332548"/>
<dbReference type="Proteomes" id="UP000008143">
    <property type="component" value="Chromosome 10"/>
</dbReference>
<dbReference type="Bgee" id="ENSXETG00000007454">
    <property type="expression patterns" value="Expressed in liver and 13 other cell types or tissues"/>
</dbReference>
<dbReference type="GO" id="GO:0016020">
    <property type="term" value="C:membrane"/>
    <property type="evidence" value="ECO:0007669"/>
    <property type="project" value="UniProtKB-SubCell"/>
</dbReference>
<dbReference type="InterPro" id="IPR029368">
    <property type="entry name" value="SMIM19"/>
</dbReference>
<dbReference type="PANTHER" id="PTHR31888">
    <property type="entry name" value="SMALL INTEGRAL MEMBRANE PROTEIN 19"/>
    <property type="match status" value="1"/>
</dbReference>
<dbReference type="PANTHER" id="PTHR31888:SF1">
    <property type="entry name" value="SMALL INTEGRAL MEMBRANE PROTEIN 19"/>
    <property type="match status" value="1"/>
</dbReference>
<dbReference type="Pfam" id="PF15117">
    <property type="entry name" value="UPF0697"/>
    <property type="match status" value="1"/>
</dbReference>
<proteinExistence type="inferred from homology"/>
<organism>
    <name type="scientific">Xenopus tropicalis</name>
    <name type="common">Western clawed frog</name>
    <name type="synonym">Silurana tropicalis</name>
    <dbReference type="NCBI Taxonomy" id="8364"/>
    <lineage>
        <taxon>Eukaryota</taxon>
        <taxon>Metazoa</taxon>
        <taxon>Chordata</taxon>
        <taxon>Craniata</taxon>
        <taxon>Vertebrata</taxon>
        <taxon>Euteleostomi</taxon>
        <taxon>Amphibia</taxon>
        <taxon>Batrachia</taxon>
        <taxon>Anura</taxon>
        <taxon>Pipoidea</taxon>
        <taxon>Pipidae</taxon>
        <taxon>Xenopodinae</taxon>
        <taxon>Xenopus</taxon>
        <taxon>Silurana</taxon>
    </lineage>
</organism>
<keyword id="KW-0472">Membrane</keyword>
<keyword id="KW-1185">Reference proteome</keyword>
<keyword id="KW-0812">Transmembrane</keyword>
<keyword id="KW-1133">Transmembrane helix</keyword>
<name>SMI19_XENTR</name>
<gene>
    <name type="primary">smim19</name>
</gene>
<comment type="subcellular location">
    <subcellularLocation>
        <location evidence="2">Membrane</location>
        <topology evidence="2">Single-pass membrane protein</topology>
    </subcellularLocation>
</comment>
<comment type="similarity">
    <text evidence="2">Belongs to the SMIM19 family.</text>
</comment>
<comment type="sequence caution" evidence="2">
    <conflict type="erroneous initiation">
        <sequence resource="EMBL-CDS" id="AAI35857"/>
    </conflict>
    <text>Truncated N-terminus.</text>
</comment>
<sequence>MAGGYGVMADDGTIDYSVHEAWNEATNVYLIVILVSIGLFMYARKNKRKIMRIFTVPPTAESATEANFYDDMKKIRLRQQLEMYYIARKHEQNDSIQLTVE</sequence>
<feature type="chain" id="PRO_0000359895" description="Small integral membrane protein 19">
    <location>
        <begin position="1"/>
        <end position="101"/>
    </location>
</feature>
<feature type="transmembrane region" description="Helical" evidence="1">
    <location>
        <begin position="25"/>
        <end position="43"/>
    </location>
</feature>
<protein>
    <recommendedName>
        <fullName>Small integral membrane protein 19</fullName>
    </recommendedName>
</protein>